<feature type="chain" id="PRO_0000102404" description="Endoribonuclease YbeY">
    <location>
        <begin position="1"/>
        <end position="156"/>
    </location>
</feature>
<feature type="binding site" evidence="1">
    <location>
        <position position="122"/>
    </location>
    <ligand>
        <name>Zn(2+)</name>
        <dbReference type="ChEBI" id="CHEBI:29105"/>
        <note>catalytic</note>
    </ligand>
</feature>
<feature type="binding site" evidence="1">
    <location>
        <position position="126"/>
    </location>
    <ligand>
        <name>Zn(2+)</name>
        <dbReference type="ChEBI" id="CHEBI:29105"/>
        <note>catalytic</note>
    </ligand>
</feature>
<feature type="binding site" evidence="1">
    <location>
        <position position="132"/>
    </location>
    <ligand>
        <name>Zn(2+)</name>
        <dbReference type="ChEBI" id="CHEBI:29105"/>
        <note>catalytic</note>
    </ligand>
</feature>
<dbReference type="EC" id="3.1.-.-" evidence="1"/>
<dbReference type="EMBL" id="AE016877">
    <property type="protein sequence ID" value="AAP11213.1"/>
    <property type="molecule type" value="Genomic_DNA"/>
</dbReference>
<dbReference type="RefSeq" id="NP_834012.1">
    <property type="nucleotide sequence ID" value="NC_004722.1"/>
</dbReference>
<dbReference type="RefSeq" id="WP_000054684.1">
    <property type="nucleotide sequence ID" value="NZ_CP138336.1"/>
</dbReference>
<dbReference type="SMR" id="Q812T1"/>
<dbReference type="STRING" id="226900.BC_4300"/>
<dbReference type="KEGG" id="bce:BC4300"/>
<dbReference type="PATRIC" id="fig|226900.8.peg.4447"/>
<dbReference type="HOGENOM" id="CLU_106710_3_0_9"/>
<dbReference type="OrthoDB" id="9807740at2"/>
<dbReference type="Proteomes" id="UP000001417">
    <property type="component" value="Chromosome"/>
</dbReference>
<dbReference type="GO" id="GO:0005737">
    <property type="term" value="C:cytoplasm"/>
    <property type="evidence" value="ECO:0007669"/>
    <property type="project" value="UniProtKB-SubCell"/>
</dbReference>
<dbReference type="GO" id="GO:0004222">
    <property type="term" value="F:metalloendopeptidase activity"/>
    <property type="evidence" value="ECO:0007669"/>
    <property type="project" value="InterPro"/>
</dbReference>
<dbReference type="GO" id="GO:0004521">
    <property type="term" value="F:RNA endonuclease activity"/>
    <property type="evidence" value="ECO:0007669"/>
    <property type="project" value="UniProtKB-UniRule"/>
</dbReference>
<dbReference type="GO" id="GO:0008270">
    <property type="term" value="F:zinc ion binding"/>
    <property type="evidence" value="ECO:0007669"/>
    <property type="project" value="UniProtKB-UniRule"/>
</dbReference>
<dbReference type="GO" id="GO:0006364">
    <property type="term" value="P:rRNA processing"/>
    <property type="evidence" value="ECO:0007669"/>
    <property type="project" value="UniProtKB-UniRule"/>
</dbReference>
<dbReference type="Gene3D" id="3.40.390.30">
    <property type="entry name" value="Metalloproteases ('zincins'), catalytic domain"/>
    <property type="match status" value="1"/>
</dbReference>
<dbReference type="HAMAP" id="MF_00009">
    <property type="entry name" value="Endoribonucl_YbeY"/>
    <property type="match status" value="1"/>
</dbReference>
<dbReference type="InterPro" id="IPR023091">
    <property type="entry name" value="MetalPrtase_cat_dom_sf_prd"/>
</dbReference>
<dbReference type="InterPro" id="IPR002036">
    <property type="entry name" value="YbeY"/>
</dbReference>
<dbReference type="InterPro" id="IPR020549">
    <property type="entry name" value="YbeY_CS"/>
</dbReference>
<dbReference type="NCBIfam" id="TIGR00043">
    <property type="entry name" value="rRNA maturation RNase YbeY"/>
    <property type="match status" value="1"/>
</dbReference>
<dbReference type="PANTHER" id="PTHR46986">
    <property type="entry name" value="ENDORIBONUCLEASE YBEY, CHLOROPLASTIC"/>
    <property type="match status" value="1"/>
</dbReference>
<dbReference type="PANTHER" id="PTHR46986:SF1">
    <property type="entry name" value="ENDORIBONUCLEASE YBEY, CHLOROPLASTIC"/>
    <property type="match status" value="1"/>
</dbReference>
<dbReference type="Pfam" id="PF02130">
    <property type="entry name" value="YbeY"/>
    <property type="match status" value="1"/>
</dbReference>
<dbReference type="SUPFAM" id="SSF55486">
    <property type="entry name" value="Metalloproteases ('zincins'), catalytic domain"/>
    <property type="match status" value="1"/>
</dbReference>
<dbReference type="PROSITE" id="PS01306">
    <property type="entry name" value="UPF0054"/>
    <property type="match status" value="1"/>
</dbReference>
<name>YBEY_BACCR</name>
<organism>
    <name type="scientific">Bacillus cereus (strain ATCC 14579 / DSM 31 / CCUG 7414 / JCM 2152 / NBRC 15305 / NCIMB 9373 / NCTC 2599 / NRRL B-3711)</name>
    <dbReference type="NCBI Taxonomy" id="226900"/>
    <lineage>
        <taxon>Bacteria</taxon>
        <taxon>Bacillati</taxon>
        <taxon>Bacillota</taxon>
        <taxon>Bacilli</taxon>
        <taxon>Bacillales</taxon>
        <taxon>Bacillaceae</taxon>
        <taxon>Bacillus</taxon>
        <taxon>Bacillus cereus group</taxon>
    </lineage>
</organism>
<reference key="1">
    <citation type="journal article" date="2003" name="Nature">
        <title>Genome sequence of Bacillus cereus and comparative analysis with Bacillus anthracis.</title>
        <authorList>
            <person name="Ivanova N."/>
            <person name="Sorokin A."/>
            <person name="Anderson I."/>
            <person name="Galleron N."/>
            <person name="Candelon B."/>
            <person name="Kapatral V."/>
            <person name="Bhattacharyya A."/>
            <person name="Reznik G."/>
            <person name="Mikhailova N."/>
            <person name="Lapidus A."/>
            <person name="Chu L."/>
            <person name="Mazur M."/>
            <person name="Goltsman E."/>
            <person name="Larsen N."/>
            <person name="D'Souza M."/>
            <person name="Walunas T."/>
            <person name="Grechkin Y."/>
            <person name="Pusch G."/>
            <person name="Haselkorn R."/>
            <person name="Fonstein M."/>
            <person name="Ehrlich S.D."/>
            <person name="Overbeek R."/>
            <person name="Kyrpides N.C."/>
        </authorList>
    </citation>
    <scope>NUCLEOTIDE SEQUENCE [LARGE SCALE GENOMIC DNA]</scope>
    <source>
        <strain>ATCC 14579 / DSM 31 / CCUG 7414 / JCM 2152 / NBRC 15305 / NCIMB 9373 / NCTC 2599 / NRRL B-3711</strain>
    </source>
</reference>
<accession>Q812T1</accession>
<protein>
    <recommendedName>
        <fullName evidence="1">Endoribonuclease YbeY</fullName>
        <ecNumber evidence="1">3.1.-.-</ecNumber>
    </recommendedName>
</protein>
<proteinExistence type="inferred from homology"/>
<keyword id="KW-0963">Cytoplasm</keyword>
<keyword id="KW-0255">Endonuclease</keyword>
<keyword id="KW-0378">Hydrolase</keyword>
<keyword id="KW-0479">Metal-binding</keyword>
<keyword id="KW-0540">Nuclease</keyword>
<keyword id="KW-1185">Reference proteome</keyword>
<keyword id="KW-0690">Ribosome biogenesis</keyword>
<keyword id="KW-0698">rRNA processing</keyword>
<keyword id="KW-0862">Zinc</keyword>
<sequence length="156" mass="18069">MSLLIDFIDETEEVKEEYMSLIREVLEKAAQMENIEDGAEVSVTFVDNERIREINRDYRDKDQPTDVISFAMEEMGEGEMEIVGAEMPRMLGDLIISIPRAKEQAEEYGHSFDRELGFLALHGFLHLLGYDHMTEEDEKEMFGRQKEILEAFGLGR</sequence>
<gene>
    <name evidence="1" type="primary">ybeY</name>
    <name type="ordered locus">BC_4300</name>
</gene>
<evidence type="ECO:0000255" key="1">
    <source>
        <dbReference type="HAMAP-Rule" id="MF_00009"/>
    </source>
</evidence>
<comment type="function">
    <text evidence="1">Single strand-specific metallo-endoribonuclease involved in late-stage 70S ribosome quality control and in maturation of the 3' terminus of the 16S rRNA.</text>
</comment>
<comment type="cofactor">
    <cofactor evidence="1">
        <name>Zn(2+)</name>
        <dbReference type="ChEBI" id="CHEBI:29105"/>
    </cofactor>
    <text evidence="1">Binds 1 zinc ion.</text>
</comment>
<comment type="subcellular location">
    <subcellularLocation>
        <location evidence="1">Cytoplasm</location>
    </subcellularLocation>
</comment>
<comment type="similarity">
    <text evidence="1">Belongs to the endoribonuclease YbeY family.</text>
</comment>